<gene>
    <name type="primary">ACS2</name>
    <name type="ordered locus">CAALFM_C104290CA</name>
    <name type="ORF">CaO19.1064</name>
    <name type="ORF">CaO19.8666</name>
</gene>
<accession>Q8NJN3</accession>
<accession>A0A1D8PD92</accession>
<accession>Q59VM9</accession>
<evidence type="ECO:0000250" key="1"/>
<evidence type="ECO:0000305" key="2"/>
<evidence type="ECO:0007829" key="3">
    <source>
        <dbReference type="PDB" id="8W0B"/>
    </source>
</evidence>
<evidence type="ECO:0007829" key="4">
    <source>
        <dbReference type="PDB" id="8W0C"/>
    </source>
</evidence>
<evidence type="ECO:0007829" key="5">
    <source>
        <dbReference type="PDB" id="8W0D"/>
    </source>
</evidence>
<evidence type="ECO:0007829" key="6">
    <source>
        <dbReference type="PDB" id="8W0H"/>
    </source>
</evidence>
<protein>
    <recommendedName>
        <fullName>Acetyl-coenzyme A synthetase 2</fullName>
        <ecNumber>6.2.1.1</ecNumber>
    </recommendedName>
    <alternativeName>
        <fullName>Acetate--CoA ligase 2</fullName>
    </alternativeName>
    <alternativeName>
        <fullName>Acyl-activating enzyme 2</fullName>
    </alternativeName>
</protein>
<comment type="catalytic activity">
    <reaction>
        <text>acetate + ATP + CoA = acetyl-CoA + AMP + diphosphate</text>
        <dbReference type="Rhea" id="RHEA:23176"/>
        <dbReference type="ChEBI" id="CHEBI:30089"/>
        <dbReference type="ChEBI" id="CHEBI:30616"/>
        <dbReference type="ChEBI" id="CHEBI:33019"/>
        <dbReference type="ChEBI" id="CHEBI:57287"/>
        <dbReference type="ChEBI" id="CHEBI:57288"/>
        <dbReference type="ChEBI" id="CHEBI:456215"/>
        <dbReference type="EC" id="6.2.1.1"/>
    </reaction>
</comment>
<comment type="similarity">
    <text evidence="2">Belongs to the ATP-dependent AMP-binding enzyme family.</text>
</comment>
<comment type="sequence caution" evidence="2">
    <conflict type="erroneous initiation">
        <sequence resource="EMBL-CDS" id="AOW26103"/>
    </conflict>
    <text>Extended N-terminus.</text>
</comment>
<feature type="chain" id="PRO_0000208406" description="Acetyl-coenzyme A synthetase 2">
    <location>
        <begin position="1"/>
        <end position="671"/>
    </location>
</feature>
<feature type="binding site" evidence="1">
    <location>
        <begin position="207"/>
        <end position="210"/>
    </location>
    <ligand>
        <name>CoA</name>
        <dbReference type="ChEBI" id="CHEBI:57287"/>
    </ligand>
</feature>
<feature type="binding site" evidence="1">
    <location>
        <position position="326"/>
    </location>
    <ligand>
        <name>CoA</name>
        <dbReference type="ChEBI" id="CHEBI:57287"/>
    </ligand>
</feature>
<feature type="binding site" evidence="1">
    <location>
        <begin position="402"/>
        <end position="404"/>
    </location>
    <ligand>
        <name>ATP</name>
        <dbReference type="ChEBI" id="CHEBI:30616"/>
    </ligand>
</feature>
<feature type="binding site" evidence="1">
    <location>
        <begin position="426"/>
        <end position="431"/>
    </location>
    <ligand>
        <name>ATP</name>
        <dbReference type="ChEBI" id="CHEBI:30616"/>
    </ligand>
</feature>
<feature type="binding site" evidence="1">
    <location>
        <position position="517"/>
    </location>
    <ligand>
        <name>ATP</name>
        <dbReference type="ChEBI" id="CHEBI:30616"/>
    </ligand>
</feature>
<feature type="binding site" evidence="1">
    <location>
        <position position="532"/>
    </location>
    <ligand>
        <name>ATP</name>
        <dbReference type="ChEBI" id="CHEBI:30616"/>
    </ligand>
</feature>
<feature type="binding site" evidence="1">
    <location>
        <position position="540"/>
    </location>
    <ligand>
        <name>CoA</name>
        <dbReference type="ChEBI" id="CHEBI:57287"/>
    </ligand>
</feature>
<feature type="binding site" evidence="1">
    <location>
        <position position="543"/>
    </location>
    <ligand>
        <name>ATP</name>
        <dbReference type="ChEBI" id="CHEBI:30616"/>
    </ligand>
</feature>
<feature type="binding site" evidence="1">
    <location>
        <position position="603"/>
    </location>
    <ligand>
        <name>CoA</name>
        <dbReference type="ChEBI" id="CHEBI:57287"/>
    </ligand>
</feature>
<feature type="sequence conflict" description="In Ref. 4; AAN01233." evidence="2" ref="4">
    <original>VIAYVA</original>
    <variation>ALLTLP</variation>
    <location>
        <begin position="576"/>
        <end position="581"/>
    </location>
</feature>
<feature type="helix" evidence="3">
    <location>
        <begin position="11"/>
        <end position="13"/>
    </location>
</feature>
<feature type="helix" evidence="3">
    <location>
        <begin position="23"/>
        <end position="28"/>
    </location>
</feature>
<feature type="strand" evidence="3">
    <location>
        <begin position="30"/>
        <end position="32"/>
    </location>
</feature>
<feature type="helix" evidence="3">
    <location>
        <begin position="38"/>
        <end position="50"/>
    </location>
</feature>
<feature type="helix" evidence="3">
    <location>
        <begin position="52"/>
        <end position="63"/>
    </location>
</feature>
<feature type="strand" evidence="3">
    <location>
        <begin position="71"/>
        <end position="75"/>
    </location>
</feature>
<feature type="turn" evidence="3">
    <location>
        <begin position="78"/>
        <end position="81"/>
    </location>
</feature>
<feature type="strand" evidence="3">
    <location>
        <begin position="84"/>
        <end position="87"/>
    </location>
</feature>
<feature type="helix" evidence="3">
    <location>
        <begin position="93"/>
        <end position="97"/>
    </location>
</feature>
<feature type="helix" evidence="3">
    <location>
        <begin position="99"/>
        <end position="104"/>
    </location>
</feature>
<feature type="strand" evidence="3">
    <location>
        <begin position="108"/>
        <end position="114"/>
    </location>
</feature>
<feature type="helix" evidence="3">
    <location>
        <begin position="118"/>
        <end position="120"/>
    </location>
</feature>
<feature type="strand" evidence="3">
    <location>
        <begin position="122"/>
        <end position="125"/>
    </location>
</feature>
<feature type="helix" evidence="3">
    <location>
        <begin position="126"/>
        <end position="142"/>
    </location>
</feature>
<feature type="strand" evidence="3">
    <location>
        <begin position="150"/>
        <end position="154"/>
    </location>
</feature>
<feature type="helix" evidence="3">
    <location>
        <begin position="159"/>
        <end position="170"/>
    </location>
</feature>
<feature type="strand" evidence="3">
    <location>
        <begin position="174"/>
        <end position="177"/>
    </location>
</feature>
<feature type="helix" evidence="3">
    <location>
        <begin position="184"/>
        <end position="194"/>
    </location>
</feature>
<feature type="strand" evidence="3">
    <location>
        <begin position="197"/>
        <end position="207"/>
    </location>
</feature>
<feature type="strand" evidence="3">
    <location>
        <begin position="210"/>
        <end position="213"/>
    </location>
</feature>
<feature type="helix" evidence="3">
    <location>
        <begin position="215"/>
        <end position="222"/>
    </location>
</feature>
<feature type="strand" evidence="3">
    <location>
        <begin position="230"/>
        <end position="234"/>
    </location>
</feature>
<feature type="turn" evidence="3">
    <location>
        <begin position="246"/>
        <end position="248"/>
    </location>
</feature>
<feature type="strand" evidence="3">
    <location>
        <begin position="249"/>
        <end position="251"/>
    </location>
</feature>
<feature type="helix" evidence="3">
    <location>
        <begin position="252"/>
        <end position="256"/>
    </location>
</feature>
<feature type="strand" evidence="3">
    <location>
        <begin position="272"/>
        <end position="279"/>
    </location>
</feature>
<feature type="strand" evidence="4">
    <location>
        <begin position="282"/>
        <end position="285"/>
    </location>
</feature>
<feature type="strand" evidence="3">
    <location>
        <begin position="287"/>
        <end position="293"/>
    </location>
</feature>
<feature type="helix" evidence="3">
    <location>
        <begin position="294"/>
        <end position="308"/>
    </location>
</feature>
<feature type="strand" evidence="3">
    <location>
        <begin position="316"/>
        <end position="318"/>
    </location>
</feature>
<feature type="helix" evidence="3">
    <location>
        <begin position="325"/>
        <end position="330"/>
    </location>
</feature>
<feature type="helix" evidence="3">
    <location>
        <begin position="333"/>
        <end position="338"/>
    </location>
</feature>
<feature type="strand" evidence="3">
    <location>
        <begin position="342"/>
        <end position="345"/>
    </location>
</feature>
<feature type="strand" evidence="5">
    <location>
        <begin position="351"/>
        <end position="353"/>
    </location>
</feature>
<feature type="helix" evidence="3">
    <location>
        <begin position="356"/>
        <end position="364"/>
    </location>
</feature>
<feature type="strand" evidence="3">
    <location>
        <begin position="367"/>
        <end position="371"/>
    </location>
</feature>
<feature type="helix" evidence="3">
    <location>
        <begin position="373"/>
        <end position="382"/>
    </location>
</feature>
<feature type="helix" evidence="3">
    <location>
        <begin position="384"/>
        <end position="387"/>
    </location>
</feature>
<feature type="strand" evidence="3">
    <location>
        <begin position="397"/>
        <end position="403"/>
    </location>
</feature>
<feature type="helix" evidence="3">
    <location>
        <begin position="407"/>
        <end position="416"/>
    </location>
</feature>
<feature type="turn" evidence="3">
    <location>
        <begin position="417"/>
        <end position="420"/>
    </location>
</feature>
<feature type="strand" evidence="3">
    <location>
        <begin position="422"/>
        <end position="428"/>
    </location>
</feature>
<feature type="helix" evidence="3">
    <location>
        <begin position="431"/>
        <end position="433"/>
    </location>
</feature>
<feature type="turn" evidence="3">
    <location>
        <begin position="442"/>
        <end position="444"/>
    </location>
</feature>
<feature type="strand" evidence="3">
    <location>
        <begin position="453"/>
        <end position="455"/>
    </location>
</feature>
<feature type="strand" evidence="3">
    <location>
        <begin position="461"/>
        <end position="464"/>
    </location>
</feature>
<feature type="turn" evidence="3">
    <location>
        <begin position="466"/>
        <end position="468"/>
    </location>
</feature>
<feature type="strand" evidence="3">
    <location>
        <begin position="474"/>
        <end position="485"/>
    </location>
</feature>
<feature type="helix" evidence="3">
    <location>
        <begin position="498"/>
        <end position="505"/>
    </location>
</feature>
<feature type="strand" evidence="3">
    <location>
        <begin position="507"/>
        <end position="509"/>
    </location>
</feature>
<feature type="strand" evidence="3">
    <location>
        <begin position="512"/>
        <end position="521"/>
    </location>
</feature>
<feature type="strand" evidence="3">
    <location>
        <begin position="527"/>
        <end position="534"/>
    </location>
</feature>
<feature type="strand" evidence="3">
    <location>
        <begin position="537"/>
        <end position="539"/>
    </location>
</feature>
<feature type="strand" evidence="3">
    <location>
        <begin position="542"/>
        <end position="544"/>
    </location>
</feature>
<feature type="helix" evidence="3">
    <location>
        <begin position="546"/>
        <end position="555"/>
    </location>
</feature>
<feature type="strand" evidence="3">
    <location>
        <begin position="559"/>
        <end position="569"/>
    </location>
</feature>
<feature type="turn" evidence="3">
    <location>
        <begin position="570"/>
        <end position="572"/>
    </location>
</feature>
<feature type="strand" evidence="3">
    <location>
        <begin position="573"/>
        <end position="584"/>
    </location>
</feature>
<feature type="turn" evidence="3">
    <location>
        <begin position="588"/>
        <end position="590"/>
    </location>
</feature>
<feature type="helix" evidence="3">
    <location>
        <begin position="591"/>
        <end position="605"/>
    </location>
</feature>
<feature type="helix" evidence="3">
    <location>
        <begin position="608"/>
        <end position="610"/>
    </location>
</feature>
<feature type="strand" evidence="3">
    <location>
        <begin position="613"/>
        <end position="619"/>
    </location>
</feature>
<feature type="strand" evidence="6">
    <location>
        <begin position="623"/>
        <end position="627"/>
    </location>
</feature>
<feature type="helix" evidence="3">
    <location>
        <begin position="631"/>
        <end position="638"/>
    </location>
</feature>
<feature type="helix" evidence="5">
    <location>
        <begin position="642"/>
        <end position="644"/>
    </location>
</feature>
<feature type="strand" evidence="6">
    <location>
        <begin position="650"/>
        <end position="652"/>
    </location>
</feature>
<feature type="helix" evidence="3">
    <location>
        <begin position="656"/>
        <end position="667"/>
    </location>
</feature>
<dbReference type="EC" id="6.2.1.1"/>
<dbReference type="EMBL" id="CP017623">
    <property type="protein sequence ID" value="AOW26103.1"/>
    <property type="status" value="ALT_INIT"/>
    <property type="molecule type" value="Genomic_DNA"/>
</dbReference>
<dbReference type="EMBL" id="AF535132">
    <property type="protein sequence ID" value="AAN01233.1"/>
    <property type="molecule type" value="Genomic_DNA"/>
</dbReference>
<dbReference type="RefSeq" id="XP_019330638.1">
    <property type="nucleotide sequence ID" value="XM_019475093.1"/>
</dbReference>
<dbReference type="PDB" id="7KDS">
    <property type="method" value="X-ray"/>
    <property type="resolution" value="2.90 A"/>
    <property type="chains" value="A=2-671"/>
</dbReference>
<dbReference type="PDB" id="8V4O">
    <property type="method" value="X-ray"/>
    <property type="resolution" value="2.70 A"/>
    <property type="chains" value="A/B/C=2-671"/>
</dbReference>
<dbReference type="PDB" id="8V4P">
    <property type="method" value="X-ray"/>
    <property type="resolution" value="2.30 A"/>
    <property type="chains" value="A/B/C=2-671"/>
</dbReference>
<dbReference type="PDB" id="8V4R">
    <property type="method" value="X-ray"/>
    <property type="resolution" value="2.70 A"/>
    <property type="chains" value="A/B/C=2-671"/>
</dbReference>
<dbReference type="PDB" id="8W0B">
    <property type="method" value="X-ray"/>
    <property type="resolution" value="2.30 A"/>
    <property type="chains" value="A/B/C=2-671"/>
</dbReference>
<dbReference type="PDB" id="8W0C">
    <property type="method" value="X-ray"/>
    <property type="resolution" value="2.35 A"/>
    <property type="chains" value="A/B/C=2-671"/>
</dbReference>
<dbReference type="PDB" id="8W0D">
    <property type="method" value="X-ray"/>
    <property type="resolution" value="2.70 A"/>
    <property type="chains" value="A/B/C=2-671"/>
</dbReference>
<dbReference type="PDB" id="8W0H">
    <property type="method" value="X-ray"/>
    <property type="resolution" value="2.95 A"/>
    <property type="chains" value="A/B/C=2-671"/>
</dbReference>
<dbReference type="PDB" id="8W0J">
    <property type="method" value="X-ray"/>
    <property type="resolution" value="2.85 A"/>
    <property type="chains" value="A/B/C=2-671"/>
</dbReference>
<dbReference type="PDB" id="8W0L">
    <property type="method" value="X-ray"/>
    <property type="resolution" value="2.75 A"/>
    <property type="chains" value="A/B/C=2-671"/>
</dbReference>
<dbReference type="PDB" id="8W0M">
    <property type="method" value="X-ray"/>
    <property type="resolution" value="3.10 A"/>
    <property type="chains" value="A/B/C=2-671"/>
</dbReference>
<dbReference type="PDBsum" id="7KDS"/>
<dbReference type="PDBsum" id="8V4O"/>
<dbReference type="PDBsum" id="8V4P"/>
<dbReference type="PDBsum" id="8V4R"/>
<dbReference type="PDBsum" id="8W0B"/>
<dbReference type="PDBsum" id="8W0C"/>
<dbReference type="PDBsum" id="8W0D"/>
<dbReference type="PDBsum" id="8W0H"/>
<dbReference type="PDBsum" id="8W0J"/>
<dbReference type="PDBsum" id="8W0L"/>
<dbReference type="PDBsum" id="8W0M"/>
<dbReference type="SMR" id="Q8NJN3"/>
<dbReference type="BioGRID" id="1227746">
    <property type="interactions" value="1"/>
</dbReference>
<dbReference type="FunCoup" id="Q8NJN3">
    <property type="interactions" value="786"/>
</dbReference>
<dbReference type="STRING" id="237561.Q8NJN3"/>
<dbReference type="PeptideAtlas" id="Q8NJN3"/>
<dbReference type="GeneID" id="3644710"/>
<dbReference type="KEGG" id="cal:CAALFM_C104290CA"/>
<dbReference type="eggNOG" id="KOG1175">
    <property type="taxonomic scope" value="Eukaryota"/>
</dbReference>
<dbReference type="HOGENOM" id="CLU_000022_3_6_1"/>
<dbReference type="InParanoid" id="Q8NJN3"/>
<dbReference type="OMA" id="TVHTKKI"/>
<dbReference type="OrthoDB" id="1706066at2759"/>
<dbReference type="PRO" id="PR:Q8NJN3"/>
<dbReference type="Proteomes" id="UP000000559">
    <property type="component" value="Chromosome 1"/>
</dbReference>
<dbReference type="GO" id="GO:0005829">
    <property type="term" value="C:cytosol"/>
    <property type="evidence" value="ECO:0000318"/>
    <property type="project" value="GO_Central"/>
</dbReference>
<dbReference type="GO" id="GO:0003987">
    <property type="term" value="F:acetate-CoA ligase activity"/>
    <property type="evidence" value="ECO:0000318"/>
    <property type="project" value="GO_Central"/>
</dbReference>
<dbReference type="GO" id="GO:0016208">
    <property type="term" value="F:AMP binding"/>
    <property type="evidence" value="ECO:0007669"/>
    <property type="project" value="InterPro"/>
</dbReference>
<dbReference type="GO" id="GO:0005524">
    <property type="term" value="F:ATP binding"/>
    <property type="evidence" value="ECO:0007669"/>
    <property type="project" value="UniProtKB-KW"/>
</dbReference>
<dbReference type="GO" id="GO:0006085">
    <property type="term" value="P:acetyl-CoA biosynthetic process"/>
    <property type="evidence" value="ECO:0000318"/>
    <property type="project" value="GO_Central"/>
</dbReference>
<dbReference type="GO" id="GO:0019427">
    <property type="term" value="P:acetyl-CoA biosynthetic process from acetate"/>
    <property type="evidence" value="ECO:0007669"/>
    <property type="project" value="InterPro"/>
</dbReference>
<dbReference type="CDD" id="cd05966">
    <property type="entry name" value="ACS"/>
    <property type="match status" value="1"/>
</dbReference>
<dbReference type="FunFam" id="3.30.300.30:FF:000004">
    <property type="entry name" value="Acetyl-coenzyme A synthetase"/>
    <property type="match status" value="1"/>
</dbReference>
<dbReference type="FunFam" id="3.40.50.12780:FF:000001">
    <property type="entry name" value="Acetyl-coenzyme A synthetase"/>
    <property type="match status" value="1"/>
</dbReference>
<dbReference type="Gene3D" id="3.30.300.30">
    <property type="match status" value="1"/>
</dbReference>
<dbReference type="Gene3D" id="3.40.50.12780">
    <property type="entry name" value="N-terminal domain of ligase-like"/>
    <property type="match status" value="1"/>
</dbReference>
<dbReference type="InterPro" id="IPR011904">
    <property type="entry name" value="Ac_CoA_lig"/>
</dbReference>
<dbReference type="InterPro" id="IPR032387">
    <property type="entry name" value="ACAS_N"/>
</dbReference>
<dbReference type="InterPro" id="IPR025110">
    <property type="entry name" value="AMP-bd_C"/>
</dbReference>
<dbReference type="InterPro" id="IPR045851">
    <property type="entry name" value="AMP-bd_C_sf"/>
</dbReference>
<dbReference type="InterPro" id="IPR020845">
    <property type="entry name" value="AMP-binding_CS"/>
</dbReference>
<dbReference type="InterPro" id="IPR000873">
    <property type="entry name" value="AMP-dep_synth/lig_dom"/>
</dbReference>
<dbReference type="InterPro" id="IPR042099">
    <property type="entry name" value="ANL_N_sf"/>
</dbReference>
<dbReference type="NCBIfam" id="TIGR02188">
    <property type="entry name" value="Ac_CoA_lig_AcsA"/>
    <property type="match status" value="1"/>
</dbReference>
<dbReference type="NCBIfam" id="NF001208">
    <property type="entry name" value="PRK00174.1"/>
    <property type="match status" value="1"/>
</dbReference>
<dbReference type="PANTHER" id="PTHR24095">
    <property type="entry name" value="ACETYL-COENZYME A SYNTHETASE"/>
    <property type="match status" value="1"/>
</dbReference>
<dbReference type="PANTHER" id="PTHR24095:SF245">
    <property type="entry name" value="ACETYL-COENZYME A SYNTHETASE 2"/>
    <property type="match status" value="1"/>
</dbReference>
<dbReference type="Pfam" id="PF16177">
    <property type="entry name" value="ACAS_N"/>
    <property type="match status" value="1"/>
</dbReference>
<dbReference type="Pfam" id="PF00501">
    <property type="entry name" value="AMP-binding"/>
    <property type="match status" value="1"/>
</dbReference>
<dbReference type="Pfam" id="PF13193">
    <property type="entry name" value="AMP-binding_C"/>
    <property type="match status" value="1"/>
</dbReference>
<dbReference type="SUPFAM" id="SSF56801">
    <property type="entry name" value="Acetyl-CoA synthetase-like"/>
    <property type="match status" value="1"/>
</dbReference>
<dbReference type="PROSITE" id="PS00455">
    <property type="entry name" value="AMP_BINDING"/>
    <property type="match status" value="1"/>
</dbReference>
<organism>
    <name type="scientific">Candida albicans (strain SC5314 / ATCC MYA-2876)</name>
    <name type="common">Yeast</name>
    <dbReference type="NCBI Taxonomy" id="237561"/>
    <lineage>
        <taxon>Eukaryota</taxon>
        <taxon>Fungi</taxon>
        <taxon>Dikarya</taxon>
        <taxon>Ascomycota</taxon>
        <taxon>Saccharomycotina</taxon>
        <taxon>Pichiomycetes</taxon>
        <taxon>Debaryomycetaceae</taxon>
        <taxon>Candida/Lodderomyces clade</taxon>
        <taxon>Candida</taxon>
    </lineage>
</organism>
<keyword id="KW-0002">3D-structure</keyword>
<keyword id="KW-0067">ATP-binding</keyword>
<keyword id="KW-0436">Ligase</keyword>
<keyword id="KW-0547">Nucleotide-binding</keyword>
<keyword id="KW-1185">Reference proteome</keyword>
<sequence length="671" mass="73890">MPTEQTHNVVHEANGVKLRETPKEFFERQPNKGHIHDVNQYKQMYEQSIKDPQGFFGPLAKELLSWDHDFHTVKSGTLKNGDAAWFLGGELNASYNCVDRHAFANPDKPALICEADDEKDSHILTYGDLLREVSKVAGVLQSWGIKKGDTVAVYLPMNAQAIIAMLAIARLGAAHSVIFAGFSAGSIKDRVNDASCKALITCDEGKRGGRTTNIKKLCDEALVDCPTVEKVLVYKRTNNPEIHLTEGRDYYWDVETAKFPGYLPPVSVNSEDPLFLLYTSGSTGTPKGVVHSTAGYLLGAALSTKYIFDIHPEDILFTAGDVGWITGHTYALYGPLLLGVPTIIFEGTPAYPDYGRFWQIVEKHKATHFYVAPTALRLLRKAGEQEIVKYDLSSLRTLGSVGEPISPDIWEWYNEFVGKNQCHISDTYWQTESGSHLIAPLAGVVPNKPGSASYPFFGIDAALIDPVTGVEIEGNDAEGVLAIKDHWPSMARTVYKNHTKYMDTYMNPYPGYYFTGDGAARDHDGYYWIRGRVDDVVNVSGHRLSTAEIEAALIEDKKVSEAAVVGIHDDITGQAVIAYVALKEGNSDEDSEGLRKELVLQVRKTIGPFAAPKSVIIVQDLPKTRSGKIMRRILRKVSSNEADQLGDISTLSNPQSVEGIISAFGAQFGKK</sequence>
<reference key="1">
    <citation type="journal article" date="2004" name="Proc. Natl. Acad. Sci. U.S.A.">
        <title>The diploid genome sequence of Candida albicans.</title>
        <authorList>
            <person name="Jones T."/>
            <person name="Federspiel N.A."/>
            <person name="Chibana H."/>
            <person name="Dungan J."/>
            <person name="Kalman S."/>
            <person name="Magee B.B."/>
            <person name="Newport G."/>
            <person name="Thorstenson Y.R."/>
            <person name="Agabian N."/>
            <person name="Magee P.T."/>
            <person name="Davis R.W."/>
            <person name="Scherer S."/>
        </authorList>
    </citation>
    <scope>NUCLEOTIDE SEQUENCE [LARGE SCALE GENOMIC DNA]</scope>
    <source>
        <strain>SC5314 / ATCC MYA-2876</strain>
    </source>
</reference>
<reference key="2">
    <citation type="journal article" date="2007" name="Genome Biol.">
        <title>Assembly of the Candida albicans genome into sixteen supercontigs aligned on the eight chromosomes.</title>
        <authorList>
            <person name="van het Hoog M."/>
            <person name="Rast T.J."/>
            <person name="Martchenko M."/>
            <person name="Grindle S."/>
            <person name="Dignard D."/>
            <person name="Hogues H."/>
            <person name="Cuomo C."/>
            <person name="Berriman M."/>
            <person name="Scherer S."/>
            <person name="Magee B.B."/>
            <person name="Whiteway M."/>
            <person name="Chibana H."/>
            <person name="Nantel A."/>
            <person name="Magee P.T."/>
        </authorList>
    </citation>
    <scope>GENOME REANNOTATION</scope>
    <source>
        <strain>SC5314 / ATCC MYA-2876</strain>
    </source>
</reference>
<reference key="3">
    <citation type="journal article" date="2013" name="Genome Biol.">
        <title>Assembly of a phased diploid Candida albicans genome facilitates allele-specific measurements and provides a simple model for repeat and indel structure.</title>
        <authorList>
            <person name="Muzzey D."/>
            <person name="Schwartz K."/>
            <person name="Weissman J.S."/>
            <person name="Sherlock G."/>
        </authorList>
    </citation>
    <scope>NUCLEOTIDE SEQUENCE [LARGE SCALE GENOMIC DNA]</scope>
    <scope>GENOME REANNOTATION</scope>
    <source>
        <strain>SC5314 / ATCC MYA-2876</strain>
    </source>
</reference>
<reference key="4">
    <citation type="submission" date="2002-08" db="EMBL/GenBank/DDBJ databases">
        <title>Acetyl-CoA synthetase 2 of Candida albicans.</title>
        <authorList>
            <person name="Jones P.M."/>
            <person name="Clarkson J.M."/>
            <person name="Wheals A.E."/>
        </authorList>
    </citation>
    <scope>NUCLEOTIDE SEQUENCE [GENOMIC DNA] OF 1-581</scope>
</reference>
<name>ACS2_CANAL</name>
<proteinExistence type="evidence at protein level"/>